<accession>P47506</accession>
<reference key="1">
    <citation type="journal article" date="1995" name="Science">
        <title>The minimal gene complement of Mycoplasma genitalium.</title>
        <authorList>
            <person name="Fraser C.M."/>
            <person name="Gocayne J.D."/>
            <person name="White O."/>
            <person name="Adams M.D."/>
            <person name="Clayton R.A."/>
            <person name="Fleischmann R.D."/>
            <person name="Bult C.J."/>
            <person name="Kerlavage A.R."/>
            <person name="Sutton G.G."/>
            <person name="Kelley J.M."/>
            <person name="Fritchman J.L."/>
            <person name="Weidman J.F."/>
            <person name="Small K.V."/>
            <person name="Sandusky M."/>
            <person name="Fuhrmann J.L."/>
            <person name="Nguyen D.T."/>
            <person name="Utterback T.R."/>
            <person name="Saudek D.M."/>
            <person name="Phillips C.A."/>
            <person name="Merrick J.M."/>
            <person name="Tomb J.-F."/>
            <person name="Dougherty B.A."/>
            <person name="Bott K.F."/>
            <person name="Hu P.-C."/>
            <person name="Lucier T.S."/>
            <person name="Peterson S.N."/>
            <person name="Smith H.O."/>
            <person name="Hutchison C.A. III"/>
            <person name="Venter J.C."/>
        </authorList>
    </citation>
    <scope>NUCLEOTIDE SEQUENCE [LARGE SCALE GENOMIC DNA]</scope>
    <source>
        <strain>ATCC 33530 / DSM 19775 / NCTC 10195 / G37</strain>
    </source>
</reference>
<organism>
    <name type="scientific">Mycoplasma genitalium (strain ATCC 33530 / DSM 19775 / NCTC 10195 / G37)</name>
    <name type="common">Mycoplasmoides genitalium</name>
    <dbReference type="NCBI Taxonomy" id="243273"/>
    <lineage>
        <taxon>Bacteria</taxon>
        <taxon>Bacillati</taxon>
        <taxon>Mycoplasmatota</taxon>
        <taxon>Mycoplasmoidales</taxon>
        <taxon>Mycoplasmoidaceae</taxon>
        <taxon>Mycoplasmoides</taxon>
    </lineage>
</organism>
<sequence>MLIAIVGKPGVGKTSLLQYLKDNYHFSVFYADSFIHEQYQKNNPGYQLIMDHFGKEFVNQTEVDRKKLANYVFSDDKLIEKLSLVTKPLLIAWIKSLKTQFQKKLALIEIAVMLNYWNEYRSLFDYVIKLERDDQLVNLALQQRNSHKKVKDLIKEPNCKIDTIFNNDSIATAALKLIKLLETFLERNKCRCDCCHIQ</sequence>
<gene>
    <name evidence="1" type="primary">coaE</name>
    <name type="ordered locus">MG264</name>
</gene>
<name>COAE_MYCGE</name>
<feature type="chain" id="PRO_0000172960" description="Dephospho-CoA kinase">
    <location>
        <begin position="1"/>
        <end position="198"/>
    </location>
</feature>
<feature type="domain" description="DPCK" evidence="1">
    <location>
        <begin position="2"/>
        <end position="90"/>
    </location>
</feature>
<feature type="binding site" evidence="1">
    <location>
        <begin position="10"/>
        <end position="15"/>
    </location>
    <ligand>
        <name>ATP</name>
        <dbReference type="ChEBI" id="CHEBI:30616"/>
    </ligand>
</feature>
<protein>
    <recommendedName>
        <fullName evidence="1">Dephospho-CoA kinase</fullName>
        <ecNumber evidence="1">2.7.1.24</ecNumber>
    </recommendedName>
    <alternativeName>
        <fullName evidence="1">Dephosphocoenzyme A kinase</fullName>
    </alternativeName>
</protein>
<evidence type="ECO:0000255" key="1">
    <source>
        <dbReference type="HAMAP-Rule" id="MF_00376"/>
    </source>
</evidence>
<evidence type="ECO:0000305" key="2"/>
<proteinExistence type="inferred from homology"/>
<dbReference type="EC" id="2.7.1.24" evidence="1"/>
<dbReference type="EMBL" id="L43967">
    <property type="protein sequence ID" value="AAC71486.1"/>
    <property type="molecule type" value="Genomic_DNA"/>
</dbReference>
<dbReference type="PIR" id="B64229">
    <property type="entry name" value="B64229"/>
</dbReference>
<dbReference type="RefSeq" id="WP_009885895.1">
    <property type="nucleotide sequence ID" value="NC_000908.2"/>
</dbReference>
<dbReference type="SMR" id="P47506"/>
<dbReference type="FunCoup" id="P47506">
    <property type="interactions" value="176"/>
</dbReference>
<dbReference type="STRING" id="243273.MG_264"/>
<dbReference type="GeneID" id="88282419"/>
<dbReference type="KEGG" id="mge:MG_264"/>
<dbReference type="eggNOG" id="COG0237">
    <property type="taxonomic scope" value="Bacteria"/>
</dbReference>
<dbReference type="HOGENOM" id="CLU_057180_4_0_14"/>
<dbReference type="InParanoid" id="P47506"/>
<dbReference type="OrthoDB" id="399073at2"/>
<dbReference type="BioCyc" id="MGEN243273:G1GJ2-320-MONOMER"/>
<dbReference type="UniPathway" id="UPA00241">
    <property type="reaction ID" value="UER00356"/>
</dbReference>
<dbReference type="Proteomes" id="UP000000807">
    <property type="component" value="Chromosome"/>
</dbReference>
<dbReference type="GO" id="GO:0005737">
    <property type="term" value="C:cytoplasm"/>
    <property type="evidence" value="ECO:0007669"/>
    <property type="project" value="UniProtKB-SubCell"/>
</dbReference>
<dbReference type="GO" id="GO:0005524">
    <property type="term" value="F:ATP binding"/>
    <property type="evidence" value="ECO:0007669"/>
    <property type="project" value="UniProtKB-UniRule"/>
</dbReference>
<dbReference type="GO" id="GO:0004140">
    <property type="term" value="F:dephospho-CoA kinase activity"/>
    <property type="evidence" value="ECO:0000318"/>
    <property type="project" value="GO_Central"/>
</dbReference>
<dbReference type="GO" id="GO:0015937">
    <property type="term" value="P:coenzyme A biosynthetic process"/>
    <property type="evidence" value="ECO:0000318"/>
    <property type="project" value="GO_Central"/>
</dbReference>
<dbReference type="CDD" id="cd02022">
    <property type="entry name" value="DPCK"/>
    <property type="match status" value="1"/>
</dbReference>
<dbReference type="Gene3D" id="3.40.50.300">
    <property type="entry name" value="P-loop containing nucleotide triphosphate hydrolases"/>
    <property type="match status" value="1"/>
</dbReference>
<dbReference type="HAMAP" id="MF_00376">
    <property type="entry name" value="Dephospho_CoA_kinase"/>
    <property type="match status" value="1"/>
</dbReference>
<dbReference type="InterPro" id="IPR001977">
    <property type="entry name" value="Depp_CoAkinase"/>
</dbReference>
<dbReference type="InterPro" id="IPR027417">
    <property type="entry name" value="P-loop_NTPase"/>
</dbReference>
<dbReference type="NCBIfam" id="TIGR00152">
    <property type="entry name" value="dephospho-CoA kinase"/>
    <property type="match status" value="1"/>
</dbReference>
<dbReference type="Pfam" id="PF01121">
    <property type="entry name" value="CoaE"/>
    <property type="match status" value="1"/>
</dbReference>
<dbReference type="SUPFAM" id="SSF52540">
    <property type="entry name" value="P-loop containing nucleoside triphosphate hydrolases"/>
    <property type="match status" value="1"/>
</dbReference>
<dbReference type="PROSITE" id="PS51219">
    <property type="entry name" value="DPCK"/>
    <property type="match status" value="1"/>
</dbReference>
<keyword id="KW-0067">ATP-binding</keyword>
<keyword id="KW-0173">Coenzyme A biosynthesis</keyword>
<keyword id="KW-0963">Cytoplasm</keyword>
<keyword id="KW-0418">Kinase</keyword>
<keyword id="KW-0547">Nucleotide-binding</keyword>
<keyword id="KW-1185">Reference proteome</keyword>
<keyword id="KW-0808">Transferase</keyword>
<comment type="function">
    <text evidence="1">Catalyzes the phosphorylation of the 3'-hydroxyl group of dephosphocoenzyme A to form coenzyme A.</text>
</comment>
<comment type="catalytic activity">
    <reaction evidence="1">
        <text>3'-dephospho-CoA + ATP = ADP + CoA + H(+)</text>
        <dbReference type="Rhea" id="RHEA:18245"/>
        <dbReference type="ChEBI" id="CHEBI:15378"/>
        <dbReference type="ChEBI" id="CHEBI:30616"/>
        <dbReference type="ChEBI" id="CHEBI:57287"/>
        <dbReference type="ChEBI" id="CHEBI:57328"/>
        <dbReference type="ChEBI" id="CHEBI:456216"/>
        <dbReference type="EC" id="2.7.1.24"/>
    </reaction>
</comment>
<comment type="pathway">
    <text evidence="1">Cofactor biosynthesis; coenzyme A biosynthesis; CoA from (R)-pantothenate: step 5/5.</text>
</comment>
<comment type="subcellular location">
    <subcellularLocation>
        <location evidence="1">Cytoplasm</location>
    </subcellularLocation>
</comment>
<comment type="similarity">
    <text evidence="1 2">Belongs to the CoaE family.</text>
</comment>